<comment type="cofactor">
    <cofactor evidence="1">
        <name>Zn(2+)</name>
        <dbReference type="ChEBI" id="CHEBI:29105"/>
    </cofactor>
    <cofactor evidence="1">
        <name>Co(2+)</name>
        <dbReference type="ChEBI" id="CHEBI:48828"/>
    </cofactor>
    <text evidence="1">Binds 2 Zn(2+) or Co(2+) ions per subunit.</text>
</comment>
<comment type="similarity">
    <text evidence="2">Belongs to the peptidase M20A family.</text>
</comment>
<dbReference type="EMBL" id="AE005174">
    <property type="protein sequence ID" value="AAG58001.1"/>
    <property type="molecule type" value="Genomic_DNA"/>
</dbReference>
<dbReference type="EMBL" id="BA000007">
    <property type="protein sequence ID" value="BAB37168.1"/>
    <property type="molecule type" value="Genomic_DNA"/>
</dbReference>
<dbReference type="PIR" id="A91097">
    <property type="entry name" value="A91097"/>
</dbReference>
<dbReference type="PIR" id="E85942">
    <property type="entry name" value="E85942"/>
</dbReference>
<dbReference type="RefSeq" id="NP_311772.1">
    <property type="nucleotide sequence ID" value="NC_002695.1"/>
</dbReference>
<dbReference type="RefSeq" id="WP_001107125.1">
    <property type="nucleotide sequence ID" value="NZ_VOAI01000003.1"/>
</dbReference>
<dbReference type="SMR" id="P65809"/>
<dbReference type="STRING" id="155864.Z4211"/>
<dbReference type="MEROPS" id="M20.A08"/>
<dbReference type="GeneID" id="916436"/>
<dbReference type="KEGG" id="ece:Z4211"/>
<dbReference type="KEGG" id="ecs:ECs_3745"/>
<dbReference type="PATRIC" id="fig|386585.9.peg.3907"/>
<dbReference type="eggNOG" id="COG0624">
    <property type="taxonomic scope" value="Bacteria"/>
</dbReference>
<dbReference type="HOGENOM" id="CLU_021802_2_1_6"/>
<dbReference type="OMA" id="GTYDQKH"/>
<dbReference type="Proteomes" id="UP000000558">
    <property type="component" value="Chromosome"/>
</dbReference>
<dbReference type="Proteomes" id="UP000002519">
    <property type="component" value="Chromosome"/>
</dbReference>
<dbReference type="GO" id="GO:0008777">
    <property type="term" value="F:acetylornithine deacetylase activity"/>
    <property type="evidence" value="ECO:0007669"/>
    <property type="project" value="TreeGrafter"/>
</dbReference>
<dbReference type="GO" id="GO:0046872">
    <property type="term" value="F:metal ion binding"/>
    <property type="evidence" value="ECO:0007669"/>
    <property type="project" value="UniProtKB-KW"/>
</dbReference>
<dbReference type="GO" id="GO:0008237">
    <property type="term" value="F:metallopeptidase activity"/>
    <property type="evidence" value="ECO:0007669"/>
    <property type="project" value="UniProtKB-KW"/>
</dbReference>
<dbReference type="GO" id="GO:0006526">
    <property type="term" value="P:L-arginine biosynthetic process"/>
    <property type="evidence" value="ECO:0007669"/>
    <property type="project" value="TreeGrafter"/>
</dbReference>
<dbReference type="GO" id="GO:0006508">
    <property type="term" value="P:proteolysis"/>
    <property type="evidence" value="ECO:0007669"/>
    <property type="project" value="UniProtKB-KW"/>
</dbReference>
<dbReference type="CDD" id="cd05649">
    <property type="entry name" value="M20_ArgE_DapE-like"/>
    <property type="match status" value="1"/>
</dbReference>
<dbReference type="Gene3D" id="3.30.70.360">
    <property type="match status" value="1"/>
</dbReference>
<dbReference type="Gene3D" id="3.40.630.10">
    <property type="entry name" value="Zn peptidases"/>
    <property type="match status" value="2"/>
</dbReference>
<dbReference type="InterPro" id="IPR001261">
    <property type="entry name" value="ArgE/DapE_CS"/>
</dbReference>
<dbReference type="InterPro" id="IPR036264">
    <property type="entry name" value="Bact_exopeptidase_dim_dom"/>
</dbReference>
<dbReference type="InterPro" id="IPR002933">
    <property type="entry name" value="Peptidase_M20"/>
</dbReference>
<dbReference type="InterPro" id="IPR017706">
    <property type="entry name" value="Peptidase_M20/DapE_YgeY"/>
</dbReference>
<dbReference type="InterPro" id="IPR011650">
    <property type="entry name" value="Peptidase_M20_dimer"/>
</dbReference>
<dbReference type="InterPro" id="IPR050072">
    <property type="entry name" value="Peptidase_M20A"/>
</dbReference>
<dbReference type="NCBIfam" id="NF009555">
    <property type="entry name" value="PRK13004.1"/>
    <property type="match status" value="1"/>
</dbReference>
<dbReference type="NCBIfam" id="TIGR03526">
    <property type="entry name" value="selenium_YgeY"/>
    <property type="match status" value="1"/>
</dbReference>
<dbReference type="PANTHER" id="PTHR43808">
    <property type="entry name" value="ACETYLORNITHINE DEACETYLASE"/>
    <property type="match status" value="1"/>
</dbReference>
<dbReference type="PANTHER" id="PTHR43808:SF31">
    <property type="entry name" value="N-ACETYL-L-CITRULLINE DEACETYLASE"/>
    <property type="match status" value="1"/>
</dbReference>
<dbReference type="Pfam" id="PF07687">
    <property type="entry name" value="M20_dimer"/>
    <property type="match status" value="1"/>
</dbReference>
<dbReference type="Pfam" id="PF01546">
    <property type="entry name" value="Peptidase_M20"/>
    <property type="match status" value="1"/>
</dbReference>
<dbReference type="SUPFAM" id="SSF55031">
    <property type="entry name" value="Bacterial exopeptidase dimerisation domain"/>
    <property type="match status" value="1"/>
</dbReference>
<dbReference type="SUPFAM" id="SSF53187">
    <property type="entry name" value="Zn-dependent exopeptidases"/>
    <property type="match status" value="1"/>
</dbReference>
<dbReference type="PROSITE" id="PS00758">
    <property type="entry name" value="ARGE_DAPE_CPG2_1"/>
    <property type="match status" value="1"/>
</dbReference>
<accession>P65809</accession>
<accession>Q46805</accession>
<reference key="1">
    <citation type="journal article" date="2001" name="Nature">
        <title>Genome sequence of enterohaemorrhagic Escherichia coli O157:H7.</title>
        <authorList>
            <person name="Perna N.T."/>
            <person name="Plunkett G. III"/>
            <person name="Burland V."/>
            <person name="Mau B."/>
            <person name="Glasner J.D."/>
            <person name="Rose D.J."/>
            <person name="Mayhew G.F."/>
            <person name="Evans P.S."/>
            <person name="Gregor J."/>
            <person name="Kirkpatrick H.A."/>
            <person name="Posfai G."/>
            <person name="Hackett J."/>
            <person name="Klink S."/>
            <person name="Boutin A."/>
            <person name="Shao Y."/>
            <person name="Miller L."/>
            <person name="Grotbeck E.J."/>
            <person name="Davis N.W."/>
            <person name="Lim A."/>
            <person name="Dimalanta E.T."/>
            <person name="Potamousis K."/>
            <person name="Apodaca J."/>
            <person name="Anantharaman T.S."/>
            <person name="Lin J."/>
            <person name="Yen G."/>
            <person name="Schwartz D.C."/>
            <person name="Welch R.A."/>
            <person name="Blattner F.R."/>
        </authorList>
    </citation>
    <scope>NUCLEOTIDE SEQUENCE [LARGE SCALE GENOMIC DNA]</scope>
    <source>
        <strain>O157:H7 / EDL933 / ATCC 700927 / EHEC</strain>
    </source>
</reference>
<reference key="2">
    <citation type="journal article" date="2001" name="DNA Res.">
        <title>Complete genome sequence of enterohemorrhagic Escherichia coli O157:H7 and genomic comparison with a laboratory strain K-12.</title>
        <authorList>
            <person name="Hayashi T."/>
            <person name="Makino K."/>
            <person name="Ohnishi M."/>
            <person name="Kurokawa K."/>
            <person name="Ishii K."/>
            <person name="Yokoyama K."/>
            <person name="Han C.-G."/>
            <person name="Ohtsubo E."/>
            <person name="Nakayama K."/>
            <person name="Murata T."/>
            <person name="Tanaka M."/>
            <person name="Tobe T."/>
            <person name="Iida T."/>
            <person name="Takami H."/>
            <person name="Honda T."/>
            <person name="Sasakawa C."/>
            <person name="Ogasawara N."/>
            <person name="Yasunaga T."/>
            <person name="Kuhara S."/>
            <person name="Shiba T."/>
            <person name="Hattori M."/>
            <person name="Shinagawa H."/>
        </authorList>
    </citation>
    <scope>NUCLEOTIDE SEQUENCE [LARGE SCALE GENOMIC DNA]</scope>
    <source>
        <strain>O157:H7 / Sakai / RIMD 0509952 / EHEC</strain>
    </source>
</reference>
<proteinExistence type="inferred from homology"/>
<gene>
    <name type="primary">ygeY</name>
    <name type="ordered locus">Z4211</name>
    <name type="ordered locus">ECs3745</name>
</gene>
<organism>
    <name type="scientific">Escherichia coli O157:H7</name>
    <dbReference type="NCBI Taxonomy" id="83334"/>
    <lineage>
        <taxon>Bacteria</taxon>
        <taxon>Pseudomonadati</taxon>
        <taxon>Pseudomonadota</taxon>
        <taxon>Gammaproteobacteria</taxon>
        <taxon>Enterobacterales</taxon>
        <taxon>Enterobacteriaceae</taxon>
        <taxon>Escherichia</taxon>
    </lineage>
</organism>
<feature type="chain" id="PRO_0000185341" description="Uncharacterized protein YgeY">
    <location>
        <begin position="1"/>
        <end position="403"/>
    </location>
</feature>
<feature type="active site" evidence="1">
    <location>
        <position position="83"/>
    </location>
</feature>
<feature type="active site" description="Proton acceptor" evidence="1">
    <location>
        <position position="148"/>
    </location>
</feature>
<feature type="binding site" evidence="1">
    <location>
        <position position="81"/>
    </location>
    <ligand>
        <name>Zn(2+)</name>
        <dbReference type="ChEBI" id="CHEBI:29105"/>
        <label>1</label>
    </ligand>
</feature>
<feature type="binding site" evidence="1">
    <location>
        <position position="114"/>
    </location>
    <ligand>
        <name>Zn(2+)</name>
        <dbReference type="ChEBI" id="CHEBI:29105"/>
        <label>1</label>
    </ligand>
</feature>
<feature type="binding site" evidence="1">
    <location>
        <position position="114"/>
    </location>
    <ligand>
        <name>Zn(2+)</name>
        <dbReference type="ChEBI" id="CHEBI:29105"/>
        <label>2</label>
    </ligand>
</feature>
<feature type="binding site" evidence="1">
    <location>
        <position position="149"/>
    </location>
    <ligand>
        <name>Zn(2+)</name>
        <dbReference type="ChEBI" id="CHEBI:29105"/>
        <label>2</label>
    </ligand>
</feature>
<feature type="binding site" evidence="1">
    <location>
        <position position="174"/>
    </location>
    <ligand>
        <name>Zn(2+)</name>
        <dbReference type="ChEBI" id="CHEBI:29105"/>
        <label>1</label>
    </ligand>
</feature>
<feature type="binding site" evidence="1">
    <location>
        <position position="374"/>
    </location>
    <ligand>
        <name>Zn(2+)</name>
        <dbReference type="ChEBI" id="CHEBI:29105"/>
        <label>2</label>
    </ligand>
</feature>
<evidence type="ECO:0000250" key="1"/>
<evidence type="ECO:0000305" key="2"/>
<keyword id="KW-0170">Cobalt</keyword>
<keyword id="KW-0378">Hydrolase</keyword>
<keyword id="KW-0479">Metal-binding</keyword>
<keyword id="KW-0482">Metalloprotease</keyword>
<keyword id="KW-0645">Protease</keyword>
<keyword id="KW-1185">Reference proteome</keyword>
<keyword id="KW-0862">Zinc</keyword>
<sequence>MAKNIPFKLILEKAKDYQADMTRFLRDMVAIPSESCDEKRVVHRIKEEMEKVGFDKVEIDPMGNVLGYIGHGPRLVAMDAHIDTVGIGNIKNWDFDPYEGMETDELIGGRGTSDQEGGMASMVYAGKIIKDLGLEDEYTLLVTGTVQEEDCDGLCWQYIIEQSGIRPEFVVSTEPTDCQVYRGQRGRMEIRIDVQGVSCHGSAPERGDNAIFKMGPILGELQELSQRLGYDEFLGKGTLTVSEIFFTSPSRCAVADSCAVSIDRRLTWGETWEGALDEIRALPAVQKANAVVSMYNYDRPSWTGLVYPTECYFPTWKVEEDHFTVKALVNAYEGLFGKAPVVDKWTFSTNGVSIMGRHGIPVIGFGPGKEPEAHAPNEKTWKSHLVTCAAMYAAIPLSWLATE</sequence>
<protein>
    <recommendedName>
        <fullName>Uncharacterized protein YgeY</fullName>
    </recommendedName>
</protein>
<name>YGEY_ECO57</name>